<dbReference type="EC" id="2.5.1.75" evidence="1"/>
<dbReference type="EMBL" id="CP000937">
    <property type="protein sequence ID" value="ABZ87763.1"/>
    <property type="molecule type" value="Genomic_DNA"/>
</dbReference>
<dbReference type="SMR" id="B0TZB0"/>
<dbReference type="KEGG" id="fph:Fphi_1537"/>
<dbReference type="eggNOG" id="COG0324">
    <property type="taxonomic scope" value="Bacteria"/>
</dbReference>
<dbReference type="HOGENOM" id="CLU_032616_0_0_6"/>
<dbReference type="GO" id="GO:0005524">
    <property type="term" value="F:ATP binding"/>
    <property type="evidence" value="ECO:0007669"/>
    <property type="project" value="UniProtKB-UniRule"/>
</dbReference>
<dbReference type="GO" id="GO:0052381">
    <property type="term" value="F:tRNA dimethylallyltransferase activity"/>
    <property type="evidence" value="ECO:0007669"/>
    <property type="project" value="UniProtKB-UniRule"/>
</dbReference>
<dbReference type="GO" id="GO:0006400">
    <property type="term" value="P:tRNA modification"/>
    <property type="evidence" value="ECO:0007669"/>
    <property type="project" value="TreeGrafter"/>
</dbReference>
<dbReference type="FunFam" id="1.10.20.140:FF:000001">
    <property type="entry name" value="tRNA dimethylallyltransferase"/>
    <property type="match status" value="1"/>
</dbReference>
<dbReference type="Gene3D" id="1.10.20.140">
    <property type="match status" value="1"/>
</dbReference>
<dbReference type="Gene3D" id="3.40.50.300">
    <property type="entry name" value="P-loop containing nucleotide triphosphate hydrolases"/>
    <property type="match status" value="1"/>
</dbReference>
<dbReference type="HAMAP" id="MF_00185">
    <property type="entry name" value="IPP_trans"/>
    <property type="match status" value="1"/>
</dbReference>
<dbReference type="InterPro" id="IPR039657">
    <property type="entry name" value="Dimethylallyltransferase"/>
</dbReference>
<dbReference type="InterPro" id="IPR018022">
    <property type="entry name" value="IPT"/>
</dbReference>
<dbReference type="InterPro" id="IPR027417">
    <property type="entry name" value="P-loop_NTPase"/>
</dbReference>
<dbReference type="NCBIfam" id="TIGR00174">
    <property type="entry name" value="miaA"/>
    <property type="match status" value="1"/>
</dbReference>
<dbReference type="PANTHER" id="PTHR11088">
    <property type="entry name" value="TRNA DIMETHYLALLYLTRANSFERASE"/>
    <property type="match status" value="1"/>
</dbReference>
<dbReference type="PANTHER" id="PTHR11088:SF60">
    <property type="entry name" value="TRNA DIMETHYLALLYLTRANSFERASE"/>
    <property type="match status" value="1"/>
</dbReference>
<dbReference type="Pfam" id="PF01715">
    <property type="entry name" value="IPPT"/>
    <property type="match status" value="1"/>
</dbReference>
<dbReference type="SUPFAM" id="SSF52540">
    <property type="entry name" value="P-loop containing nucleoside triphosphate hydrolases"/>
    <property type="match status" value="1"/>
</dbReference>
<organism>
    <name type="scientific">Francisella philomiragia subsp. philomiragia (strain ATCC 25017 / CCUG 19701 / FSC 153 / O#319-036)</name>
    <dbReference type="NCBI Taxonomy" id="484022"/>
    <lineage>
        <taxon>Bacteria</taxon>
        <taxon>Pseudomonadati</taxon>
        <taxon>Pseudomonadota</taxon>
        <taxon>Gammaproteobacteria</taxon>
        <taxon>Thiotrichales</taxon>
        <taxon>Francisellaceae</taxon>
        <taxon>Francisella</taxon>
    </lineage>
</organism>
<comment type="function">
    <text evidence="1">Catalyzes the transfer of a dimethylallyl group onto the adenine at position 37 in tRNAs that read codons beginning with uridine, leading to the formation of N6-(dimethylallyl)adenosine (i(6)A).</text>
</comment>
<comment type="catalytic activity">
    <reaction evidence="1">
        <text>adenosine(37) in tRNA + dimethylallyl diphosphate = N(6)-dimethylallyladenosine(37) in tRNA + diphosphate</text>
        <dbReference type="Rhea" id="RHEA:26482"/>
        <dbReference type="Rhea" id="RHEA-COMP:10162"/>
        <dbReference type="Rhea" id="RHEA-COMP:10375"/>
        <dbReference type="ChEBI" id="CHEBI:33019"/>
        <dbReference type="ChEBI" id="CHEBI:57623"/>
        <dbReference type="ChEBI" id="CHEBI:74411"/>
        <dbReference type="ChEBI" id="CHEBI:74415"/>
        <dbReference type="EC" id="2.5.1.75"/>
    </reaction>
</comment>
<comment type="cofactor">
    <cofactor evidence="1">
        <name>Mg(2+)</name>
        <dbReference type="ChEBI" id="CHEBI:18420"/>
    </cofactor>
</comment>
<comment type="subunit">
    <text evidence="1">Monomer.</text>
</comment>
<comment type="similarity">
    <text evidence="1">Belongs to the IPP transferase family.</text>
</comment>
<protein>
    <recommendedName>
        <fullName evidence="1">tRNA dimethylallyltransferase</fullName>
        <ecNumber evidence="1">2.5.1.75</ecNumber>
    </recommendedName>
    <alternativeName>
        <fullName evidence="1">Dimethylallyl diphosphate:tRNA dimethylallyltransferase</fullName>
        <shortName evidence="1">DMAPP:tRNA dimethylallyltransferase</shortName>
        <shortName evidence="1">DMATase</shortName>
    </alternativeName>
    <alternativeName>
        <fullName evidence="1">Isopentenyl-diphosphate:tRNA isopentenyltransferase</fullName>
        <shortName evidence="1">IPP transferase</shortName>
        <shortName evidence="1">IPPT</shortName>
        <shortName evidence="1">IPTase</shortName>
    </alternativeName>
</protein>
<reference key="1">
    <citation type="submission" date="2007-12" db="EMBL/GenBank/DDBJ databases">
        <title>Complete sequence of chromosome of Francisella philomiragia subsp. philomiragia ATCC 25017.</title>
        <authorList>
            <consortium name="US DOE Joint Genome Institute"/>
            <person name="Copeland A."/>
            <person name="Lucas S."/>
            <person name="Lapidus A."/>
            <person name="Barry K."/>
            <person name="Detter J.C."/>
            <person name="Glavina del Rio T."/>
            <person name="Hammon N."/>
            <person name="Israni S."/>
            <person name="Dalin E."/>
            <person name="Tice H."/>
            <person name="Pitluck S."/>
            <person name="Chain P."/>
            <person name="Malfatti S."/>
            <person name="Shin M."/>
            <person name="Vergez L."/>
            <person name="Schmutz J."/>
            <person name="Larimer F."/>
            <person name="Land M."/>
            <person name="Hauser L."/>
            <person name="Richardson P."/>
        </authorList>
    </citation>
    <scope>NUCLEOTIDE SEQUENCE [LARGE SCALE GENOMIC DNA]</scope>
    <source>
        <strain>ATCC 25017 / CCUG 19701 / FSC 153 / O#319-036</strain>
    </source>
</reference>
<gene>
    <name evidence="1" type="primary">miaA</name>
    <name type="ordered locus">Fphi_1537</name>
</gene>
<sequence>MNKLIYGLAGPTASGKTSLSISIANKINAEIISVDSSLVYKGMNIGTAKPTLDEQGDIKHHLIDIIEPTESFSVADFITNVNKLKKEIWSRGKEVLLVGGTMLYFKGLIEGLSSLPESQLEIRQTLELERKAKGLQYLHQQLNKMDQESAQKINPNDQQRIFRALEVIMITGKKYSELVKTSKVGGLEEQLKLCALVPNDRSILHNNIELRFKQMLDQGFLDEVQSLRKNPKLTKETTAIRSVGYRQAWEYLDGDISYEEFVKKGIVATRQLAKRQLTWIRNWQDEINLVEVENQNKEQQILEYFDYK</sequence>
<feature type="chain" id="PRO_1000077396" description="tRNA dimethylallyltransferase">
    <location>
        <begin position="1"/>
        <end position="308"/>
    </location>
</feature>
<feature type="region of interest" description="Interaction with substrate tRNA" evidence="1">
    <location>
        <begin position="35"/>
        <end position="38"/>
    </location>
</feature>
<feature type="region of interest" description="Interaction with substrate tRNA" evidence="1">
    <location>
        <begin position="159"/>
        <end position="163"/>
    </location>
</feature>
<feature type="binding site" evidence="1">
    <location>
        <begin position="10"/>
        <end position="17"/>
    </location>
    <ligand>
        <name>ATP</name>
        <dbReference type="ChEBI" id="CHEBI:30616"/>
    </ligand>
</feature>
<feature type="binding site" evidence="1">
    <location>
        <begin position="12"/>
        <end position="17"/>
    </location>
    <ligand>
        <name>substrate</name>
    </ligand>
</feature>
<feature type="site" description="Interaction with substrate tRNA" evidence="1">
    <location>
        <position position="101"/>
    </location>
</feature>
<feature type="site" description="Interaction with substrate tRNA" evidence="1">
    <location>
        <position position="123"/>
    </location>
</feature>
<proteinExistence type="inferred from homology"/>
<evidence type="ECO:0000255" key="1">
    <source>
        <dbReference type="HAMAP-Rule" id="MF_00185"/>
    </source>
</evidence>
<keyword id="KW-0067">ATP-binding</keyword>
<keyword id="KW-0460">Magnesium</keyword>
<keyword id="KW-0547">Nucleotide-binding</keyword>
<keyword id="KW-0808">Transferase</keyword>
<keyword id="KW-0819">tRNA processing</keyword>
<name>MIAA_FRAP2</name>
<accession>B0TZB0</accession>